<comment type="subcellular location">
    <subcellularLocation>
        <location evidence="3">Membrane</location>
        <topology evidence="3">Multi-pass membrane protein</topology>
    </subcellularLocation>
</comment>
<comment type="alternative products">
    <event type="alternative splicing"/>
    <isoform>
        <id>B9G125-1</id>
        <name>1</name>
        <sequence type="displayed"/>
    </isoform>
    <isoform>
        <id>B9G125-2</id>
        <name>2</name>
        <sequence type="described" ref="VSP_039794"/>
    </isoform>
</comment>
<comment type="similarity">
    <text evidence="3">Belongs to the GDT1 family.</text>
</comment>
<reference key="1">
    <citation type="journal article" date="2005" name="Nature">
        <title>The map-based sequence of the rice genome.</title>
        <authorList>
            <consortium name="International rice genome sequencing project (IRGSP)"/>
        </authorList>
    </citation>
    <scope>NUCLEOTIDE SEQUENCE [LARGE SCALE GENOMIC DNA]</scope>
    <source>
        <strain>cv. Nipponbare</strain>
    </source>
</reference>
<reference key="2">
    <citation type="journal article" date="2008" name="Nucleic Acids Res.">
        <title>The rice annotation project database (RAP-DB): 2008 update.</title>
        <authorList>
            <consortium name="The rice annotation project (RAP)"/>
        </authorList>
    </citation>
    <scope>GENOME REANNOTATION</scope>
    <source>
        <strain>cv. Nipponbare</strain>
    </source>
</reference>
<reference key="3">
    <citation type="journal article" date="2013" name="Rice">
        <title>Improvement of the Oryza sativa Nipponbare reference genome using next generation sequence and optical map data.</title>
        <authorList>
            <person name="Kawahara Y."/>
            <person name="de la Bastide M."/>
            <person name="Hamilton J.P."/>
            <person name="Kanamori H."/>
            <person name="McCombie W.R."/>
            <person name="Ouyang S."/>
            <person name="Schwartz D.C."/>
            <person name="Tanaka T."/>
            <person name="Wu J."/>
            <person name="Zhou S."/>
            <person name="Childs K.L."/>
            <person name="Davidson R.M."/>
            <person name="Lin H."/>
            <person name="Quesada-Ocampo L."/>
            <person name="Vaillancourt B."/>
            <person name="Sakai H."/>
            <person name="Lee S.S."/>
            <person name="Kim J."/>
            <person name="Numa H."/>
            <person name="Itoh T."/>
            <person name="Buell C.R."/>
            <person name="Matsumoto T."/>
        </authorList>
    </citation>
    <scope>GENOME REANNOTATION</scope>
    <source>
        <strain>cv. Nipponbare</strain>
    </source>
</reference>
<reference key="4">
    <citation type="journal article" date="2005" name="PLoS Biol.">
        <title>The genomes of Oryza sativa: a history of duplications.</title>
        <authorList>
            <person name="Yu J."/>
            <person name="Wang J."/>
            <person name="Lin W."/>
            <person name="Li S."/>
            <person name="Li H."/>
            <person name="Zhou J."/>
            <person name="Ni P."/>
            <person name="Dong W."/>
            <person name="Hu S."/>
            <person name="Zeng C."/>
            <person name="Zhang J."/>
            <person name="Zhang Y."/>
            <person name="Li R."/>
            <person name="Xu Z."/>
            <person name="Li S."/>
            <person name="Li X."/>
            <person name="Zheng H."/>
            <person name="Cong L."/>
            <person name="Lin L."/>
            <person name="Yin J."/>
            <person name="Geng J."/>
            <person name="Li G."/>
            <person name="Shi J."/>
            <person name="Liu J."/>
            <person name="Lv H."/>
            <person name="Li J."/>
            <person name="Wang J."/>
            <person name="Deng Y."/>
            <person name="Ran L."/>
            <person name="Shi X."/>
            <person name="Wang X."/>
            <person name="Wu Q."/>
            <person name="Li C."/>
            <person name="Ren X."/>
            <person name="Wang J."/>
            <person name="Wang X."/>
            <person name="Li D."/>
            <person name="Liu D."/>
            <person name="Zhang X."/>
            <person name="Ji Z."/>
            <person name="Zhao W."/>
            <person name="Sun Y."/>
            <person name="Zhang Z."/>
            <person name="Bao J."/>
            <person name="Han Y."/>
            <person name="Dong L."/>
            <person name="Ji J."/>
            <person name="Chen P."/>
            <person name="Wu S."/>
            <person name="Liu J."/>
            <person name="Xiao Y."/>
            <person name="Bu D."/>
            <person name="Tan J."/>
            <person name="Yang L."/>
            <person name="Ye C."/>
            <person name="Zhang J."/>
            <person name="Xu J."/>
            <person name="Zhou Y."/>
            <person name="Yu Y."/>
            <person name="Zhang B."/>
            <person name="Zhuang S."/>
            <person name="Wei H."/>
            <person name="Liu B."/>
            <person name="Lei M."/>
            <person name="Yu H."/>
            <person name="Li Y."/>
            <person name="Xu H."/>
            <person name="Wei S."/>
            <person name="He X."/>
            <person name="Fang L."/>
            <person name="Zhang Z."/>
            <person name="Zhang Y."/>
            <person name="Huang X."/>
            <person name="Su Z."/>
            <person name="Tong W."/>
            <person name="Li J."/>
            <person name="Tong Z."/>
            <person name="Li S."/>
            <person name="Ye J."/>
            <person name="Wang L."/>
            <person name="Fang L."/>
            <person name="Lei T."/>
            <person name="Chen C.-S."/>
            <person name="Chen H.-C."/>
            <person name="Xu Z."/>
            <person name="Li H."/>
            <person name="Huang H."/>
            <person name="Zhang F."/>
            <person name="Xu H."/>
            <person name="Li N."/>
            <person name="Zhao C."/>
            <person name="Li S."/>
            <person name="Dong L."/>
            <person name="Huang Y."/>
            <person name="Li L."/>
            <person name="Xi Y."/>
            <person name="Qi Q."/>
            <person name="Li W."/>
            <person name="Zhang B."/>
            <person name="Hu W."/>
            <person name="Zhang Y."/>
            <person name="Tian X."/>
            <person name="Jiao Y."/>
            <person name="Liang X."/>
            <person name="Jin J."/>
            <person name="Gao L."/>
            <person name="Zheng W."/>
            <person name="Hao B."/>
            <person name="Liu S.-M."/>
            <person name="Wang W."/>
            <person name="Yuan L."/>
            <person name="Cao M."/>
            <person name="McDermott J."/>
            <person name="Samudrala R."/>
            <person name="Wang J."/>
            <person name="Wong G.K.-S."/>
            <person name="Yang H."/>
        </authorList>
    </citation>
    <scope>NUCLEOTIDE SEQUENCE [LARGE SCALE GENOMIC DNA]</scope>
    <source>
        <strain>cv. Nipponbare</strain>
    </source>
</reference>
<reference key="5">
    <citation type="journal article" date="2003" name="Science">
        <title>Collection, mapping, and annotation of over 28,000 cDNA clones from japonica rice.</title>
        <authorList>
            <consortium name="The rice full-length cDNA consortium"/>
        </authorList>
    </citation>
    <scope>NUCLEOTIDE SEQUENCE [LARGE SCALE MRNA] (ISOFORM 2)</scope>
    <source>
        <strain>cv. Nipponbare</strain>
    </source>
</reference>
<name>GDT15_ORYSJ</name>
<gene>
    <name type="ordered locus">Os08g0433100</name>
    <name type="ordered locus">LOC_Os08g33630</name>
    <name type="ORF">OsJ_27425</name>
    <name type="ORF">P0431A03.16</name>
</gene>
<organism>
    <name type="scientific">Oryza sativa subsp. japonica</name>
    <name type="common">Rice</name>
    <dbReference type="NCBI Taxonomy" id="39947"/>
    <lineage>
        <taxon>Eukaryota</taxon>
        <taxon>Viridiplantae</taxon>
        <taxon>Streptophyta</taxon>
        <taxon>Embryophyta</taxon>
        <taxon>Tracheophyta</taxon>
        <taxon>Spermatophyta</taxon>
        <taxon>Magnoliopsida</taxon>
        <taxon>Liliopsida</taxon>
        <taxon>Poales</taxon>
        <taxon>Poaceae</taxon>
        <taxon>BOP clade</taxon>
        <taxon>Oryzoideae</taxon>
        <taxon>Oryzeae</taxon>
        <taxon>Oryzinae</taxon>
        <taxon>Oryza</taxon>
        <taxon>Oryza sativa</taxon>
    </lineage>
</organism>
<proteinExistence type="evidence at transcript level"/>
<evidence type="ECO:0000255" key="1"/>
<evidence type="ECO:0000303" key="2">
    <source>
    </source>
</evidence>
<evidence type="ECO:0000305" key="3"/>
<dbReference type="EMBL" id="AP004666">
    <property type="protein sequence ID" value="BAD09832.1"/>
    <property type="molecule type" value="Genomic_DNA"/>
</dbReference>
<dbReference type="EMBL" id="AP008214">
    <property type="protein sequence ID" value="BAF23785.1"/>
    <property type="molecule type" value="Genomic_DNA"/>
</dbReference>
<dbReference type="EMBL" id="AP014964">
    <property type="protein sequence ID" value="BAT05571.1"/>
    <property type="molecule type" value="Genomic_DNA"/>
</dbReference>
<dbReference type="EMBL" id="CM000145">
    <property type="protein sequence ID" value="EEE68742.1"/>
    <property type="molecule type" value="Genomic_DNA"/>
</dbReference>
<dbReference type="EMBL" id="AK066308">
    <property type="protein sequence ID" value="BAG89903.1"/>
    <property type="molecule type" value="mRNA"/>
</dbReference>
<dbReference type="RefSeq" id="XP_015648201.1">
    <property type="nucleotide sequence ID" value="XM_015792715.1"/>
</dbReference>
<dbReference type="FunCoup" id="B9G125">
    <property type="interactions" value="119"/>
</dbReference>
<dbReference type="STRING" id="39947.B9G125"/>
<dbReference type="PaxDb" id="39947-B9G125"/>
<dbReference type="KEGG" id="dosa:Os08g0433100"/>
<dbReference type="eggNOG" id="KOG2881">
    <property type="taxonomic scope" value="Eukaryota"/>
</dbReference>
<dbReference type="HOGENOM" id="CLU_040186_0_2_1"/>
<dbReference type="InParanoid" id="B9G125"/>
<dbReference type="OMA" id="ILGHAIC"/>
<dbReference type="OrthoDB" id="442680at2759"/>
<dbReference type="Proteomes" id="UP000000763">
    <property type="component" value="Chromosome 8"/>
</dbReference>
<dbReference type="Proteomes" id="UP000007752">
    <property type="component" value="Chromosome 8"/>
</dbReference>
<dbReference type="Proteomes" id="UP000059680">
    <property type="component" value="Chromosome 8"/>
</dbReference>
<dbReference type="GO" id="GO:0005794">
    <property type="term" value="C:Golgi apparatus"/>
    <property type="evidence" value="ECO:0000318"/>
    <property type="project" value="GO_Central"/>
</dbReference>
<dbReference type="GO" id="GO:0016020">
    <property type="term" value="C:membrane"/>
    <property type="evidence" value="ECO:0007669"/>
    <property type="project" value="UniProtKB-SubCell"/>
</dbReference>
<dbReference type="GO" id="GO:0015085">
    <property type="term" value="F:calcium ion transmembrane transporter activity"/>
    <property type="evidence" value="ECO:0000318"/>
    <property type="project" value="GO_Central"/>
</dbReference>
<dbReference type="GO" id="GO:0005384">
    <property type="term" value="F:manganese ion transmembrane transporter activity"/>
    <property type="evidence" value="ECO:0000318"/>
    <property type="project" value="GO_Central"/>
</dbReference>
<dbReference type="GO" id="GO:0070588">
    <property type="term" value="P:calcium ion transmembrane transport"/>
    <property type="evidence" value="ECO:0000318"/>
    <property type="project" value="GO_Central"/>
</dbReference>
<dbReference type="GO" id="GO:0032468">
    <property type="term" value="P:Golgi calcium ion homeostasis"/>
    <property type="evidence" value="ECO:0000318"/>
    <property type="project" value="GO_Central"/>
</dbReference>
<dbReference type="GO" id="GO:0032472">
    <property type="term" value="P:Golgi calcium ion transport"/>
    <property type="evidence" value="ECO:0000318"/>
    <property type="project" value="GO_Central"/>
</dbReference>
<dbReference type="GO" id="GO:0071421">
    <property type="term" value="P:manganese ion transmembrane transport"/>
    <property type="evidence" value="ECO:0000318"/>
    <property type="project" value="GO_Central"/>
</dbReference>
<dbReference type="InterPro" id="IPR001727">
    <property type="entry name" value="GDT1-like"/>
</dbReference>
<dbReference type="PANTHER" id="PTHR12608:SF1">
    <property type="entry name" value="TRANSMEMBRANE PROTEIN 165"/>
    <property type="match status" value="1"/>
</dbReference>
<dbReference type="PANTHER" id="PTHR12608">
    <property type="entry name" value="TRANSMEMBRANE PROTEIN HTP-1 RELATED"/>
    <property type="match status" value="1"/>
</dbReference>
<dbReference type="Pfam" id="PF01169">
    <property type="entry name" value="GDT1"/>
    <property type="match status" value="2"/>
</dbReference>
<sequence>MAPSLLGGFTKSLAMTVLSEIGDKTFFAAAILAMRYPRKLVLAGCLTSLTVMTALSVSLGWVAPNLISRKWTHHVTTLLFFVFGILSLWEGFKEDGDSEELAEVEAELDANFKSNKAESKSKSKANDDKKKQQRPFVLQFFSPIFIKAFSITFFGEWGDKSQIATIGLAADENPFGVVLGGVLAQALCTTAAVMGGKSLASQISEKMVGLSSGVLFLLFGIMSYLSGPEGEL</sequence>
<protein>
    <recommendedName>
        <fullName>GDT1-like protein 5</fullName>
    </recommendedName>
</protein>
<keyword id="KW-0025">Alternative splicing</keyword>
<keyword id="KW-0472">Membrane</keyword>
<keyword id="KW-1185">Reference proteome</keyword>
<keyword id="KW-0812">Transmembrane</keyword>
<keyword id="KW-1133">Transmembrane helix</keyword>
<accession>B9G125</accession>
<accession>Q6ZA97</accession>
<feature type="chain" id="PRO_0000398776" description="GDT1-like protein 5">
    <location>
        <begin position="1"/>
        <end position="232"/>
    </location>
</feature>
<feature type="transmembrane region" description="Helical" evidence="1">
    <location>
        <begin position="13"/>
        <end position="33"/>
    </location>
</feature>
<feature type="transmembrane region" description="Helical" evidence="1">
    <location>
        <begin position="40"/>
        <end position="60"/>
    </location>
</feature>
<feature type="transmembrane region" description="Helical" evidence="1">
    <location>
        <begin position="72"/>
        <end position="92"/>
    </location>
</feature>
<feature type="transmembrane region" description="Helical" evidence="1">
    <location>
        <begin position="135"/>
        <end position="155"/>
    </location>
</feature>
<feature type="transmembrane region" description="Helical" evidence="1">
    <location>
        <begin position="175"/>
        <end position="195"/>
    </location>
</feature>
<feature type="transmembrane region" description="Helical" evidence="1">
    <location>
        <begin position="207"/>
        <end position="227"/>
    </location>
</feature>
<feature type="splice variant" id="VSP_039794" description="In isoform 2." evidence="2">
    <original>AQALCTTAAVMGGKSLASQISEKMVGLSSGVLFLLFGIMSYLSGPEGEL</original>
    <variation>YELHLLFPLHFLNGLLCGPD</variation>
    <location>
        <begin position="184"/>
        <end position="232"/>
    </location>
</feature>